<sequence>MPFLFVSGTGTGVGKTFSTAVLVRYLADQGHDVLPVKLVQTGELPGEGDIFNIERLTGIAGEEFARFKDPLAPNLAARREGVEPIQFDQIISWLRGFDDPDRIIVVEGAGGLLVRLGEDFTLADVASALNAPLVIVTSTGLGSLNAAELSVEAANRRGLTVLGVLGGSIPQNPDLATMLNLEEFERVTGVPFWGALPEGLSRVEGFVEKQSFPALDAFKKPPAR</sequence>
<accession>P46397</accession>
<gene>
    <name evidence="1" type="primary">bioD</name>
    <name type="ordered locus">Cgl2605</name>
    <name type="ordered locus">cg2886</name>
</gene>
<comment type="function">
    <text evidence="1">Catalyzes a mechanistically unusual reaction, the ATP-dependent insertion of CO2 between the N7 and N8 nitrogen atoms of 7,8-diaminopelargonic acid (DAPA, also called 7,8-diammoniononanoate) to form a ureido ring.</text>
</comment>
<comment type="catalytic activity">
    <reaction evidence="1">
        <text>(7R,8S)-7,8-diammoniononanoate + CO2 + ATP = (4R,5S)-dethiobiotin + ADP + phosphate + 3 H(+)</text>
        <dbReference type="Rhea" id="RHEA:15805"/>
        <dbReference type="ChEBI" id="CHEBI:15378"/>
        <dbReference type="ChEBI" id="CHEBI:16526"/>
        <dbReference type="ChEBI" id="CHEBI:30616"/>
        <dbReference type="ChEBI" id="CHEBI:43474"/>
        <dbReference type="ChEBI" id="CHEBI:149469"/>
        <dbReference type="ChEBI" id="CHEBI:149473"/>
        <dbReference type="ChEBI" id="CHEBI:456216"/>
        <dbReference type="EC" id="6.3.3.3"/>
    </reaction>
</comment>
<comment type="cofactor">
    <cofactor evidence="1">
        <name>Mg(2+)</name>
        <dbReference type="ChEBI" id="CHEBI:18420"/>
    </cofactor>
</comment>
<comment type="pathway">
    <text evidence="1">Cofactor biosynthesis; biotin biosynthesis; biotin from 7,8-diaminononanoate: step 1/2.</text>
</comment>
<comment type="subunit">
    <text evidence="1">Homodimer.</text>
</comment>
<comment type="subcellular location">
    <subcellularLocation>
        <location evidence="1">Cytoplasm</location>
    </subcellularLocation>
</comment>
<comment type="similarity">
    <text evidence="1">Belongs to the dethiobiotin synthetase family.</text>
</comment>
<keyword id="KW-0067">ATP-binding</keyword>
<keyword id="KW-0093">Biotin biosynthesis</keyword>
<keyword id="KW-0963">Cytoplasm</keyword>
<keyword id="KW-0436">Ligase</keyword>
<keyword id="KW-0460">Magnesium</keyword>
<keyword id="KW-0479">Metal-binding</keyword>
<keyword id="KW-0547">Nucleotide-binding</keyword>
<keyword id="KW-1185">Reference proteome</keyword>
<name>BIOD_CORGL</name>
<protein>
    <recommendedName>
        <fullName evidence="1">ATP-dependent dethiobiotin synthetase BioD</fullName>
        <ecNumber evidence="1">6.3.3.3</ecNumber>
    </recommendedName>
    <alternativeName>
        <fullName evidence="1">DTB synthetase</fullName>
        <shortName evidence="1">DTBS</shortName>
    </alternativeName>
    <alternativeName>
        <fullName evidence="1">Dethiobiotin synthase</fullName>
    </alternativeName>
</protein>
<reference key="1">
    <citation type="journal article" date="1993" name="DNA Seq.">
        <title>Genomic organization of the biotin biosynthetic genes of coryneform bacteria: cloning and sequencing of the bioA-bioD genes from Brevibacterium flavum.</title>
        <authorList>
            <person name="Hatakeyama K."/>
            <person name="Hohama K."/>
            <person name="Vertes A.A."/>
            <person name="Kobayashi M."/>
            <person name="Kurusu Y."/>
            <person name="Yukawa H."/>
        </authorList>
    </citation>
    <scope>NUCLEOTIDE SEQUENCE [GENOMIC DNA]</scope>
    <source>
        <strain>MJ233</strain>
    </source>
</reference>
<reference key="2">
    <citation type="journal article" date="2003" name="Appl. Microbiol. Biotechnol.">
        <title>The Corynebacterium glutamicum genome: features and impacts on biotechnological processes.</title>
        <authorList>
            <person name="Ikeda M."/>
            <person name="Nakagawa S."/>
        </authorList>
    </citation>
    <scope>NUCLEOTIDE SEQUENCE [LARGE SCALE GENOMIC DNA]</scope>
    <source>
        <strain>ATCC 13032 / DSM 20300 / JCM 1318 / BCRC 11384 / CCUG 27702 / LMG 3730 / NBRC 12168 / NCIMB 10025 / NRRL B-2784 / 534</strain>
    </source>
</reference>
<reference key="3">
    <citation type="journal article" date="2003" name="J. Biotechnol.">
        <title>The complete Corynebacterium glutamicum ATCC 13032 genome sequence and its impact on the production of L-aspartate-derived amino acids and vitamins.</title>
        <authorList>
            <person name="Kalinowski J."/>
            <person name="Bathe B."/>
            <person name="Bartels D."/>
            <person name="Bischoff N."/>
            <person name="Bott M."/>
            <person name="Burkovski A."/>
            <person name="Dusch N."/>
            <person name="Eggeling L."/>
            <person name="Eikmanns B.J."/>
            <person name="Gaigalat L."/>
            <person name="Goesmann A."/>
            <person name="Hartmann M."/>
            <person name="Huthmacher K."/>
            <person name="Kraemer R."/>
            <person name="Linke B."/>
            <person name="McHardy A.C."/>
            <person name="Meyer F."/>
            <person name="Moeckel B."/>
            <person name="Pfefferle W."/>
            <person name="Puehler A."/>
            <person name="Rey D.A."/>
            <person name="Rueckert C."/>
            <person name="Rupp O."/>
            <person name="Sahm H."/>
            <person name="Wendisch V.F."/>
            <person name="Wiegraebe I."/>
            <person name="Tauch A."/>
        </authorList>
    </citation>
    <scope>NUCLEOTIDE SEQUENCE [LARGE SCALE GENOMIC DNA]</scope>
    <source>
        <strain>ATCC 13032 / DSM 20300 / JCM 1318 / BCRC 11384 / CCUG 27702 / LMG 3730 / NBRC 12168 / NCIMB 10025 / NRRL B-2784 / 534</strain>
    </source>
</reference>
<organism>
    <name type="scientific">Corynebacterium glutamicum (strain ATCC 13032 / DSM 20300 / JCM 1318 / BCRC 11384 / CCUG 27702 / LMG 3730 / NBRC 12168 / NCIMB 10025 / NRRL B-2784 / 534)</name>
    <dbReference type="NCBI Taxonomy" id="196627"/>
    <lineage>
        <taxon>Bacteria</taxon>
        <taxon>Bacillati</taxon>
        <taxon>Actinomycetota</taxon>
        <taxon>Actinomycetes</taxon>
        <taxon>Mycobacteriales</taxon>
        <taxon>Corynebacteriaceae</taxon>
        <taxon>Corynebacterium</taxon>
    </lineage>
</organism>
<dbReference type="EC" id="6.3.3.3" evidence="1"/>
<dbReference type="EMBL" id="D14083">
    <property type="protein sequence ID" value="BAA03168.1"/>
    <property type="molecule type" value="Genomic_DNA"/>
</dbReference>
<dbReference type="EMBL" id="BA000036">
    <property type="protein sequence ID" value="BAB99998.1"/>
    <property type="molecule type" value="Genomic_DNA"/>
</dbReference>
<dbReference type="EMBL" id="BX927155">
    <property type="protein sequence ID" value="CAF21267.1"/>
    <property type="molecule type" value="Genomic_DNA"/>
</dbReference>
<dbReference type="PIR" id="I40337">
    <property type="entry name" value="I40337"/>
</dbReference>
<dbReference type="RefSeq" id="NP_601806.1">
    <property type="nucleotide sequence ID" value="NC_003450.3"/>
</dbReference>
<dbReference type="RefSeq" id="WP_011015244.1">
    <property type="nucleotide sequence ID" value="NC_006958.1"/>
</dbReference>
<dbReference type="SMR" id="P46397"/>
<dbReference type="STRING" id="196627.cg2886"/>
<dbReference type="GeneID" id="1020552"/>
<dbReference type="KEGG" id="cgb:cg2886"/>
<dbReference type="KEGG" id="cgl:Cgl2605"/>
<dbReference type="PATRIC" id="fig|196627.13.peg.2541"/>
<dbReference type="eggNOG" id="COG0132">
    <property type="taxonomic scope" value="Bacteria"/>
</dbReference>
<dbReference type="HOGENOM" id="CLU_072551_1_1_11"/>
<dbReference type="OrthoDB" id="9802610at2"/>
<dbReference type="BioCyc" id="CORYNE:G18NG-12221-MONOMER"/>
<dbReference type="UniPathway" id="UPA00078">
    <property type="reaction ID" value="UER00161"/>
</dbReference>
<dbReference type="Proteomes" id="UP000000582">
    <property type="component" value="Chromosome"/>
</dbReference>
<dbReference type="Proteomes" id="UP000001009">
    <property type="component" value="Chromosome"/>
</dbReference>
<dbReference type="GO" id="GO:0005829">
    <property type="term" value="C:cytosol"/>
    <property type="evidence" value="ECO:0007669"/>
    <property type="project" value="TreeGrafter"/>
</dbReference>
<dbReference type="GO" id="GO:0005524">
    <property type="term" value="F:ATP binding"/>
    <property type="evidence" value="ECO:0007669"/>
    <property type="project" value="UniProtKB-UniRule"/>
</dbReference>
<dbReference type="GO" id="GO:0004141">
    <property type="term" value="F:dethiobiotin synthase activity"/>
    <property type="evidence" value="ECO:0007669"/>
    <property type="project" value="UniProtKB-UniRule"/>
</dbReference>
<dbReference type="GO" id="GO:0000287">
    <property type="term" value="F:magnesium ion binding"/>
    <property type="evidence" value="ECO:0007669"/>
    <property type="project" value="UniProtKB-UniRule"/>
</dbReference>
<dbReference type="GO" id="GO:0009102">
    <property type="term" value="P:biotin biosynthetic process"/>
    <property type="evidence" value="ECO:0007669"/>
    <property type="project" value="UniProtKB-UniRule"/>
</dbReference>
<dbReference type="CDD" id="cd03109">
    <property type="entry name" value="DTBS"/>
    <property type="match status" value="1"/>
</dbReference>
<dbReference type="Gene3D" id="3.40.50.300">
    <property type="entry name" value="P-loop containing nucleotide triphosphate hydrolases"/>
    <property type="match status" value="1"/>
</dbReference>
<dbReference type="HAMAP" id="MF_00336">
    <property type="entry name" value="BioD"/>
    <property type="match status" value="1"/>
</dbReference>
<dbReference type="InterPro" id="IPR004472">
    <property type="entry name" value="DTB_synth_BioD"/>
</dbReference>
<dbReference type="InterPro" id="IPR027417">
    <property type="entry name" value="P-loop_NTPase"/>
</dbReference>
<dbReference type="NCBIfam" id="TIGR00347">
    <property type="entry name" value="bioD"/>
    <property type="match status" value="1"/>
</dbReference>
<dbReference type="PANTHER" id="PTHR43210">
    <property type="entry name" value="DETHIOBIOTIN SYNTHETASE"/>
    <property type="match status" value="1"/>
</dbReference>
<dbReference type="PANTHER" id="PTHR43210:SF5">
    <property type="entry name" value="DETHIOBIOTIN SYNTHETASE"/>
    <property type="match status" value="1"/>
</dbReference>
<dbReference type="Pfam" id="PF13500">
    <property type="entry name" value="AAA_26"/>
    <property type="match status" value="1"/>
</dbReference>
<dbReference type="PIRSF" id="PIRSF006755">
    <property type="entry name" value="DTB_synth"/>
    <property type="match status" value="1"/>
</dbReference>
<dbReference type="SUPFAM" id="SSF52540">
    <property type="entry name" value="P-loop containing nucleoside triphosphate hydrolases"/>
    <property type="match status" value="1"/>
</dbReference>
<feature type="chain" id="PRO_0000187960" description="ATP-dependent dethiobiotin synthetase BioD">
    <location>
        <begin position="1"/>
        <end position="224"/>
    </location>
</feature>
<feature type="active site" evidence="1">
    <location>
        <position position="37"/>
    </location>
</feature>
<feature type="binding site" evidence="1">
    <location>
        <begin position="12"/>
        <end position="17"/>
    </location>
    <ligand>
        <name>ATP</name>
        <dbReference type="ChEBI" id="CHEBI:30616"/>
    </ligand>
</feature>
<feature type="binding site" evidence="1">
    <location>
        <position position="16"/>
    </location>
    <ligand>
        <name>Mg(2+)</name>
        <dbReference type="ChEBI" id="CHEBI:18420"/>
    </ligand>
</feature>
<feature type="binding site" evidence="1">
    <location>
        <position position="41"/>
    </location>
    <ligand>
        <name>substrate</name>
    </ligand>
</feature>
<feature type="binding site" evidence="1">
    <location>
        <position position="52"/>
    </location>
    <ligand>
        <name>ATP</name>
        <dbReference type="ChEBI" id="CHEBI:30616"/>
    </ligand>
</feature>
<feature type="binding site" evidence="1">
    <location>
        <position position="52"/>
    </location>
    <ligand>
        <name>Mg(2+)</name>
        <dbReference type="ChEBI" id="CHEBI:18420"/>
    </ligand>
</feature>
<feature type="binding site" evidence="1">
    <location>
        <begin position="107"/>
        <end position="110"/>
    </location>
    <ligand>
        <name>ATP</name>
        <dbReference type="ChEBI" id="CHEBI:30616"/>
    </ligand>
</feature>
<feature type="binding site" evidence="1">
    <location>
        <position position="107"/>
    </location>
    <ligand>
        <name>Mg(2+)</name>
        <dbReference type="ChEBI" id="CHEBI:18420"/>
    </ligand>
</feature>
<feature type="binding site" evidence="1">
    <location>
        <begin position="167"/>
        <end position="168"/>
    </location>
    <ligand>
        <name>ATP</name>
        <dbReference type="ChEBI" id="CHEBI:30616"/>
    </ligand>
</feature>
<feature type="binding site" evidence="1">
    <location>
        <begin position="197"/>
        <end position="199"/>
    </location>
    <ligand>
        <name>ATP</name>
        <dbReference type="ChEBI" id="CHEBI:30616"/>
    </ligand>
</feature>
<feature type="binding site" evidence="1">
    <location>
        <position position="204"/>
    </location>
    <ligand>
        <name>ATP</name>
        <dbReference type="ChEBI" id="CHEBI:30616"/>
    </ligand>
</feature>
<feature type="sequence conflict" description="In Ref. 1; BAA03168." evidence="2" ref="1">
    <original>N</original>
    <variation>T</variation>
    <location>
        <position position="52"/>
    </location>
</feature>
<feature type="sequence conflict" description="In Ref. 1; BAA03168." evidence="2" ref="1">
    <original>V</original>
    <variation>I</variation>
    <location>
        <position position="82"/>
    </location>
</feature>
<feature type="sequence conflict" description="In Ref. 1; BAA03168." evidence="2" ref="1">
    <original>V</original>
    <variation>W</variation>
    <location>
        <position position="136"/>
    </location>
</feature>
<proteinExistence type="inferred from homology"/>
<evidence type="ECO:0000255" key="1">
    <source>
        <dbReference type="HAMAP-Rule" id="MF_00336"/>
    </source>
</evidence>
<evidence type="ECO:0000305" key="2"/>